<dbReference type="EC" id="2.7.1.144" evidence="1"/>
<dbReference type="EMBL" id="M80797">
    <property type="protein sequence ID" value="AAA26906.1"/>
    <property type="molecule type" value="Genomic_DNA"/>
</dbReference>
<dbReference type="EMBL" id="AE014133">
    <property type="protein sequence ID" value="AAN59148.1"/>
    <property type="molecule type" value="Genomic_DNA"/>
</dbReference>
<dbReference type="PIR" id="E43258">
    <property type="entry name" value="E43258"/>
</dbReference>
<dbReference type="RefSeq" id="NP_721842.1">
    <property type="nucleotide sequence ID" value="NC_004350.2"/>
</dbReference>
<dbReference type="RefSeq" id="WP_002262465.1">
    <property type="nucleotide sequence ID" value="NC_004350.2"/>
</dbReference>
<dbReference type="SMR" id="P26421"/>
<dbReference type="STRING" id="210007.SMU_1494"/>
<dbReference type="KEGG" id="smu:SMU_1494"/>
<dbReference type="PATRIC" id="fig|210007.7.peg.1330"/>
<dbReference type="eggNOG" id="COG1105">
    <property type="taxonomic scope" value="Bacteria"/>
</dbReference>
<dbReference type="HOGENOM" id="CLU_050013_5_0_9"/>
<dbReference type="OrthoDB" id="9801219at2"/>
<dbReference type="PhylomeDB" id="P26421"/>
<dbReference type="UniPathway" id="UPA00704">
    <property type="reaction ID" value="UER00715"/>
</dbReference>
<dbReference type="Proteomes" id="UP000002512">
    <property type="component" value="Chromosome"/>
</dbReference>
<dbReference type="GO" id="GO:0005829">
    <property type="term" value="C:cytosol"/>
    <property type="evidence" value="ECO:0007669"/>
    <property type="project" value="TreeGrafter"/>
</dbReference>
<dbReference type="GO" id="GO:0005524">
    <property type="term" value="F:ATP binding"/>
    <property type="evidence" value="ECO:0007669"/>
    <property type="project" value="UniProtKB-KW"/>
</dbReference>
<dbReference type="GO" id="GO:0008443">
    <property type="term" value="F:phosphofructokinase activity"/>
    <property type="evidence" value="ECO:0007669"/>
    <property type="project" value="TreeGrafter"/>
</dbReference>
<dbReference type="GO" id="GO:0009024">
    <property type="term" value="F:tagatose-6-phosphate kinase activity"/>
    <property type="evidence" value="ECO:0000247"/>
    <property type="project" value="CACAO"/>
</dbReference>
<dbReference type="GO" id="GO:2001059">
    <property type="term" value="P:D-tagatose 6-phosphate catabolic process"/>
    <property type="evidence" value="ECO:0007669"/>
    <property type="project" value="UniProtKB-UniRule"/>
</dbReference>
<dbReference type="GO" id="GO:0019512">
    <property type="term" value="P:lactose catabolic process via tagatose-6-phosphate"/>
    <property type="evidence" value="ECO:0007669"/>
    <property type="project" value="InterPro"/>
</dbReference>
<dbReference type="CDD" id="cd01164">
    <property type="entry name" value="FruK_PfkB_like"/>
    <property type="match status" value="1"/>
</dbReference>
<dbReference type="FunFam" id="3.40.1190.20:FF:000001">
    <property type="entry name" value="Phosphofructokinase"/>
    <property type="match status" value="1"/>
</dbReference>
<dbReference type="Gene3D" id="3.40.1190.20">
    <property type="match status" value="1"/>
</dbReference>
<dbReference type="HAMAP" id="MF_01557">
    <property type="entry name" value="LacC"/>
    <property type="match status" value="1"/>
</dbReference>
<dbReference type="InterPro" id="IPR002173">
    <property type="entry name" value="Carboh/pur_kinase_PfkB_CS"/>
</dbReference>
<dbReference type="InterPro" id="IPR005926">
    <property type="entry name" value="LacC"/>
</dbReference>
<dbReference type="InterPro" id="IPR011611">
    <property type="entry name" value="PfkB_dom"/>
</dbReference>
<dbReference type="InterPro" id="IPR029056">
    <property type="entry name" value="Ribokinase-like"/>
</dbReference>
<dbReference type="InterPro" id="IPR017583">
    <property type="entry name" value="Tagatose/fructose_Pkinase"/>
</dbReference>
<dbReference type="NCBIfam" id="TIGR03168">
    <property type="entry name" value="1-PFK"/>
    <property type="match status" value="1"/>
</dbReference>
<dbReference type="NCBIfam" id="TIGR01231">
    <property type="entry name" value="lacC"/>
    <property type="match status" value="1"/>
</dbReference>
<dbReference type="NCBIfam" id="NF010033">
    <property type="entry name" value="PRK13508.1"/>
    <property type="match status" value="1"/>
</dbReference>
<dbReference type="PANTHER" id="PTHR46566:SF5">
    <property type="entry name" value="1-PHOSPHOFRUCTOKINASE"/>
    <property type="match status" value="1"/>
</dbReference>
<dbReference type="PANTHER" id="PTHR46566">
    <property type="entry name" value="1-PHOSPHOFRUCTOKINASE-RELATED"/>
    <property type="match status" value="1"/>
</dbReference>
<dbReference type="Pfam" id="PF00294">
    <property type="entry name" value="PfkB"/>
    <property type="match status" value="1"/>
</dbReference>
<dbReference type="PIRSF" id="PIRSF000535">
    <property type="entry name" value="1PFK/6PFK/LacC"/>
    <property type="match status" value="1"/>
</dbReference>
<dbReference type="SUPFAM" id="SSF53613">
    <property type="entry name" value="Ribokinase-like"/>
    <property type="match status" value="1"/>
</dbReference>
<dbReference type="PROSITE" id="PS00583">
    <property type="entry name" value="PFKB_KINASES_1"/>
    <property type="match status" value="1"/>
</dbReference>
<dbReference type="PROSITE" id="PS00584">
    <property type="entry name" value="PFKB_KINASES_2"/>
    <property type="match status" value="1"/>
</dbReference>
<protein>
    <recommendedName>
        <fullName evidence="1">Tagatose-6-phosphate kinase</fullName>
        <ecNumber evidence="1">2.7.1.144</ecNumber>
    </recommendedName>
    <alternativeName>
        <fullName evidence="1">Phosphotagatokinase</fullName>
    </alternativeName>
</protein>
<proteinExistence type="inferred from homology"/>
<reference key="1">
    <citation type="journal article" date="1992" name="J. Bacteriol.">
        <title>Nucleotide and deduced amino acid sequences of the lacR, lacABCD, and lacFE genes encoding the repressor, tagatose 6-phosphate gene cluster, and sugar-specific phosphotransferase system components of the lactose operon of Streptococcus mutans.</title>
        <authorList>
            <person name="Rosey E.L."/>
            <person name="Stewart G.C."/>
        </authorList>
    </citation>
    <scope>NUCLEOTIDE SEQUENCE [GENOMIC DNA]</scope>
</reference>
<reference key="2">
    <citation type="journal article" date="2002" name="Proc. Natl. Acad. Sci. U.S.A.">
        <title>Genome sequence of Streptococcus mutans UA159, a cariogenic dental pathogen.</title>
        <authorList>
            <person name="Ajdic D.J."/>
            <person name="McShan W.M."/>
            <person name="McLaughlin R.E."/>
            <person name="Savic G."/>
            <person name="Chang J."/>
            <person name="Carson M.B."/>
            <person name="Primeaux C."/>
            <person name="Tian R."/>
            <person name="Kenton S."/>
            <person name="Jia H.G."/>
            <person name="Lin S.P."/>
            <person name="Qian Y."/>
            <person name="Li S."/>
            <person name="Zhu H."/>
            <person name="Najar F.Z."/>
            <person name="Lai H."/>
            <person name="White J."/>
            <person name="Roe B.A."/>
            <person name="Ferretti J.J."/>
        </authorList>
    </citation>
    <scope>NUCLEOTIDE SEQUENCE [LARGE SCALE GENOMIC DNA]</scope>
    <source>
        <strain>ATCC 700610 / UA159</strain>
    </source>
</reference>
<feature type="chain" id="PRO_0000203930" description="Tagatose-6-phosphate kinase">
    <location>
        <begin position="1"/>
        <end position="310"/>
    </location>
</feature>
<gene>
    <name evidence="1" type="primary">lacC</name>
    <name type="ordered locus">SMU_1494</name>
</gene>
<comment type="catalytic activity">
    <reaction evidence="1">
        <text>D-tagatofuranose 6-phosphate + ATP = D-tagatofuranose 1,6-bisphosphate + ADP + H(+)</text>
        <dbReference type="Rhea" id="RHEA:12420"/>
        <dbReference type="ChEBI" id="CHEBI:15378"/>
        <dbReference type="ChEBI" id="CHEBI:30616"/>
        <dbReference type="ChEBI" id="CHEBI:58694"/>
        <dbReference type="ChEBI" id="CHEBI:58695"/>
        <dbReference type="ChEBI" id="CHEBI:456216"/>
        <dbReference type="EC" id="2.7.1.144"/>
    </reaction>
</comment>
<comment type="pathway">
    <text evidence="1">Carbohydrate metabolism; D-tagatose 6-phosphate degradation; D-glyceraldehyde 3-phosphate and glycerone phosphate from D-tagatose 6-phosphate: step 1/2.</text>
</comment>
<comment type="similarity">
    <text evidence="1">Belongs to the carbohydrate kinase PfkB family. LacC subfamily.</text>
</comment>
<organism>
    <name type="scientific">Streptococcus mutans serotype c (strain ATCC 700610 / UA159)</name>
    <dbReference type="NCBI Taxonomy" id="210007"/>
    <lineage>
        <taxon>Bacteria</taxon>
        <taxon>Bacillati</taxon>
        <taxon>Bacillota</taxon>
        <taxon>Bacilli</taxon>
        <taxon>Lactobacillales</taxon>
        <taxon>Streptococcaceae</taxon>
        <taxon>Streptococcus</taxon>
    </lineage>
</organism>
<sequence length="310" mass="33363">MMLTVTMNPSIDIAYQLDDLKVDTVNRVIETHKTPGGKGLNVTRVLSQLGDDVLASGLLGGKLGEFLEAELDKSAIKHSFYKISAETRNCIAILHGGYQTEILEQGPYVSAKESKGFLEFFEKLLPKLEVVAISGSLPKGVPVDYYSQMIAICKQHQVPIVLDCSGQALLEVLNGAAKPTVIKPNTEELSQIMEREITNDVAVLKHALASPIFSGIDWIIVSLGSQGAFAKHGQTFYKVTIPKIAVVNPVGSGDSTVAGITSALAAGASDEKLLKKANTLGMLNAQEKLTGHVNLENYDNLYQQIEVAEV</sequence>
<evidence type="ECO:0000255" key="1">
    <source>
        <dbReference type="HAMAP-Rule" id="MF_01557"/>
    </source>
</evidence>
<accession>P26421</accession>
<name>LACC_STRMU</name>
<keyword id="KW-0067">ATP-binding</keyword>
<keyword id="KW-0418">Kinase</keyword>
<keyword id="KW-0423">Lactose metabolism</keyword>
<keyword id="KW-0547">Nucleotide-binding</keyword>
<keyword id="KW-1185">Reference proteome</keyword>
<keyword id="KW-0808">Transferase</keyword>